<gene>
    <name evidence="1" type="primary">slyA</name>
    <name type="synonym">hor</name>
    <name type="synonym">rap</name>
    <name type="ordered locus">plu2600</name>
</gene>
<keyword id="KW-0010">Activator</keyword>
<keyword id="KW-0045">Antibiotic biosynthesis</keyword>
<keyword id="KW-0238">DNA-binding</keyword>
<keyword id="KW-1185">Reference proteome</keyword>
<keyword id="KW-0678">Repressor</keyword>
<keyword id="KW-0804">Transcription</keyword>
<keyword id="KW-0805">Transcription regulation</keyword>
<dbReference type="EMBL" id="AJ457089">
    <property type="protein sequence ID" value="CAD29771.1"/>
    <property type="molecule type" value="Genomic_DNA"/>
</dbReference>
<dbReference type="EMBL" id="BX571867">
    <property type="protein sequence ID" value="CAE14974.1"/>
    <property type="molecule type" value="Genomic_DNA"/>
</dbReference>
<dbReference type="RefSeq" id="WP_011146822.1">
    <property type="nucleotide sequence ID" value="NC_005126.1"/>
</dbReference>
<dbReference type="SMR" id="Q8KM02"/>
<dbReference type="STRING" id="243265.plu2600"/>
<dbReference type="GeneID" id="48848859"/>
<dbReference type="KEGG" id="plu:plu2600"/>
<dbReference type="eggNOG" id="COG1846">
    <property type="taxonomic scope" value="Bacteria"/>
</dbReference>
<dbReference type="HOGENOM" id="CLU_083287_18_2_6"/>
<dbReference type="OrthoDB" id="5296557at2"/>
<dbReference type="Proteomes" id="UP000002514">
    <property type="component" value="Chromosome"/>
</dbReference>
<dbReference type="GO" id="GO:0003677">
    <property type="term" value="F:DNA binding"/>
    <property type="evidence" value="ECO:0007669"/>
    <property type="project" value="UniProtKB-UniRule"/>
</dbReference>
<dbReference type="GO" id="GO:0003700">
    <property type="term" value="F:DNA-binding transcription factor activity"/>
    <property type="evidence" value="ECO:0007669"/>
    <property type="project" value="UniProtKB-UniRule"/>
</dbReference>
<dbReference type="GO" id="GO:0017000">
    <property type="term" value="P:antibiotic biosynthetic process"/>
    <property type="evidence" value="ECO:0007669"/>
    <property type="project" value="UniProtKB-KW"/>
</dbReference>
<dbReference type="GO" id="GO:0006950">
    <property type="term" value="P:response to stress"/>
    <property type="evidence" value="ECO:0007669"/>
    <property type="project" value="TreeGrafter"/>
</dbReference>
<dbReference type="Gene3D" id="1.10.10.10">
    <property type="entry name" value="Winged helix-like DNA-binding domain superfamily/Winged helix DNA-binding domain"/>
    <property type="match status" value="1"/>
</dbReference>
<dbReference type="HAMAP" id="MF_01819">
    <property type="entry name" value="HTH_type_SlyA"/>
    <property type="match status" value="1"/>
</dbReference>
<dbReference type="InterPro" id="IPR000835">
    <property type="entry name" value="HTH_MarR-typ"/>
</dbReference>
<dbReference type="InterPro" id="IPR039422">
    <property type="entry name" value="MarR/SlyA-like"/>
</dbReference>
<dbReference type="InterPro" id="IPR023071">
    <property type="entry name" value="Tscrpt_reg_SlyA"/>
</dbReference>
<dbReference type="InterPro" id="IPR036388">
    <property type="entry name" value="WH-like_DNA-bd_sf"/>
</dbReference>
<dbReference type="InterPro" id="IPR036390">
    <property type="entry name" value="WH_DNA-bd_sf"/>
</dbReference>
<dbReference type="NCBIfam" id="NF002926">
    <property type="entry name" value="PRK03573.1"/>
    <property type="match status" value="1"/>
</dbReference>
<dbReference type="PANTHER" id="PTHR33164:SF64">
    <property type="entry name" value="TRANSCRIPTIONAL REGULATOR SLYA"/>
    <property type="match status" value="1"/>
</dbReference>
<dbReference type="PANTHER" id="PTHR33164">
    <property type="entry name" value="TRANSCRIPTIONAL REGULATOR, MARR FAMILY"/>
    <property type="match status" value="1"/>
</dbReference>
<dbReference type="Pfam" id="PF01047">
    <property type="entry name" value="MarR"/>
    <property type="match status" value="1"/>
</dbReference>
<dbReference type="PRINTS" id="PR00598">
    <property type="entry name" value="HTHMARR"/>
</dbReference>
<dbReference type="SMART" id="SM00347">
    <property type="entry name" value="HTH_MARR"/>
    <property type="match status" value="1"/>
</dbReference>
<dbReference type="SUPFAM" id="SSF46785">
    <property type="entry name" value="Winged helix' DNA-binding domain"/>
    <property type="match status" value="1"/>
</dbReference>
<dbReference type="PROSITE" id="PS50995">
    <property type="entry name" value="HTH_MARR_2"/>
    <property type="match status" value="1"/>
</dbReference>
<evidence type="ECO:0000255" key="1">
    <source>
        <dbReference type="HAMAP-Rule" id="MF_01819"/>
    </source>
</evidence>
<evidence type="ECO:0000269" key="2">
    <source>
    </source>
</evidence>
<proteinExistence type="inferred from homology"/>
<comment type="function">
    <text evidence="1 2">Transcription regulator that can specifically activate or repress expression of target genes. Regulates the cpm operon, which contains cpmA, cpmB, cpmC, cpmD, cpmE, cpmF, cpmG and cpmH, involved in carbapenem-like antibiotic production.</text>
</comment>
<comment type="subunit">
    <text evidence="1">Homodimer.</text>
</comment>
<comment type="similarity">
    <text evidence="1">Belongs to the SlyA family.</text>
</comment>
<reference key="1">
    <citation type="journal article" date="2002" name="Appl. Environ. Microbiol.">
        <title>Identification, characterization and regulation of a cluster of genes involved in carbapenem biosynthesis in Photorhabdus luminescens.</title>
        <authorList>
            <person name="Derzelle S."/>
            <person name="Duchaud E."/>
            <person name="Kunst F."/>
            <person name="Danchin A."/>
            <person name="Bertin P."/>
        </authorList>
    </citation>
    <scope>NUCLEOTIDE SEQUENCE [GENOMIC DNA]</scope>
    <scope>FUNCTION</scope>
    <source>
        <strain>DSM 15139 / CIP 105565 / TT01</strain>
    </source>
</reference>
<reference key="2">
    <citation type="journal article" date="2003" name="Nat. Biotechnol.">
        <title>The genome sequence of the entomopathogenic bacterium Photorhabdus luminescens.</title>
        <authorList>
            <person name="Duchaud E."/>
            <person name="Rusniok C."/>
            <person name="Frangeul L."/>
            <person name="Buchrieser C."/>
            <person name="Givaudan A."/>
            <person name="Taourit S."/>
            <person name="Bocs S."/>
            <person name="Boursaux-Eude C."/>
            <person name="Chandler M."/>
            <person name="Charles J.-F."/>
            <person name="Dassa E."/>
            <person name="Derose R."/>
            <person name="Derzelle S."/>
            <person name="Freyssinet G."/>
            <person name="Gaudriault S."/>
            <person name="Medigue C."/>
            <person name="Lanois A."/>
            <person name="Powell K."/>
            <person name="Siguier P."/>
            <person name="Vincent R."/>
            <person name="Wingate V."/>
            <person name="Zouine M."/>
            <person name="Glaser P."/>
            <person name="Boemare N."/>
            <person name="Danchin A."/>
            <person name="Kunst F."/>
        </authorList>
    </citation>
    <scope>NUCLEOTIDE SEQUENCE [LARGE SCALE GENOMIC DNA]</scope>
    <source>
        <strain>DSM 15139 / CIP 105565 / TT01</strain>
    </source>
</reference>
<protein>
    <recommendedName>
        <fullName evidence="1">Transcriptional regulator SlyA</fullName>
    </recommendedName>
</protein>
<name>SLYA_PHOLL</name>
<organism>
    <name type="scientific">Photorhabdus laumondii subsp. laumondii (strain DSM 15139 / CIP 105565 / TT01)</name>
    <name type="common">Photorhabdus luminescens subsp. laumondii</name>
    <dbReference type="NCBI Taxonomy" id="243265"/>
    <lineage>
        <taxon>Bacteria</taxon>
        <taxon>Pseudomonadati</taxon>
        <taxon>Pseudomonadota</taxon>
        <taxon>Gammaproteobacteria</taxon>
        <taxon>Enterobacterales</taxon>
        <taxon>Morganellaceae</taxon>
        <taxon>Photorhabdus</taxon>
    </lineage>
</organism>
<accession>Q8KM02</accession>
<sequence>MESTLGSDLARLVRIWRALIDYRLKPLELTQTHWVTLYNISRLPQEQSQIQLAKAIGIEQPSLVRTLDQLEEKKLITRHTCANDRRAKRIKLTEDSASVIRELDGVIESTRNEILGGISREELAFLSTLVQKLEQNIIQLQSR</sequence>
<feature type="chain" id="PRO_0000054390" description="Transcriptional regulator SlyA">
    <location>
        <begin position="1"/>
        <end position="143"/>
    </location>
</feature>
<feature type="domain" description="HTH marR-type" evidence="1">
    <location>
        <begin position="2"/>
        <end position="135"/>
    </location>
</feature>
<feature type="DNA-binding region" description="H-T-H motif" evidence="1">
    <location>
        <begin position="49"/>
        <end position="72"/>
    </location>
</feature>